<organism>
    <name type="scientific">Ornithorhynchus anatinus</name>
    <name type="common">Duckbill platypus</name>
    <dbReference type="NCBI Taxonomy" id="9258"/>
    <lineage>
        <taxon>Eukaryota</taxon>
        <taxon>Metazoa</taxon>
        <taxon>Chordata</taxon>
        <taxon>Craniata</taxon>
        <taxon>Vertebrata</taxon>
        <taxon>Euteleostomi</taxon>
        <taxon>Mammalia</taxon>
        <taxon>Monotremata</taxon>
        <taxon>Ornithorhynchidae</taxon>
        <taxon>Ornithorhynchus</taxon>
    </lineage>
</organism>
<accession>P0C8A5</accession>
<reference key="1">
    <citation type="journal article" date="2008" name="Genome Res.">
        <title>Defensins and the convergent evolution of platypus and reptile venom genes.</title>
        <authorList>
            <person name="Whittington C.M."/>
            <person name="Papenfuss A.T."/>
            <person name="Bansal P."/>
            <person name="Torres A.M."/>
            <person name="Wong E.S."/>
            <person name="Deakin J.E."/>
            <person name="Graves T."/>
            <person name="Alsop A."/>
            <person name="Schatzkamer K."/>
            <person name="Kremitzki C."/>
            <person name="Ponting C.P."/>
            <person name="Temple-Smith P."/>
            <person name="Warren W.C."/>
            <person name="Kuchel P.W."/>
            <person name="Belov K."/>
        </authorList>
    </citation>
    <scope>NUCLEOTIDE SEQUENCE [MRNA]</scope>
</reference>
<reference key="2">
    <citation type="journal article" date="2008" name="Toxicon">
        <title>Expression patterns of platypus defensin and related venom genes across a range of tissue types reveal the possibility of broader functions for OvDLPs than previously suspected.</title>
        <authorList>
            <person name="Whittington C.M."/>
            <person name="Papenfuss A.T."/>
            <person name="Kuchel P.W."/>
            <person name="Belov K."/>
        </authorList>
    </citation>
    <scope>TISSUE SPECIFICITY</scope>
</reference>
<sequence>MNAHVLLLCTILFLLVHTPPVLGGMKEKCVTMGGYCRKQCRVQDALSGYCRNENPCCVRRVLMEDG</sequence>
<protein>
    <recommendedName>
        <fullName evidence="8 9">Defensin-B1</fullName>
        <shortName evidence="5">DefB1</shortName>
        <shortName evidence="6">OaDefB1</shortName>
    </recommendedName>
</protein>
<proteinExistence type="evidence at transcript level"/>
<keyword id="KW-0044">Antibiotic</keyword>
<keyword id="KW-0929">Antimicrobial</keyword>
<keyword id="KW-0165">Cleavage on pair of basic residues</keyword>
<keyword id="KW-0211">Defensin</keyword>
<keyword id="KW-1015">Disulfide bond</keyword>
<keyword id="KW-1185">Reference proteome</keyword>
<keyword id="KW-0964">Secreted</keyword>
<keyword id="KW-0732">Signal</keyword>
<comment type="function">
    <text evidence="2">Has bactericidal activity. May act as a ligand for C-C chemokine receptor CCR6. Positively regulates the sperm motility and bactericidal activity in a CCR6-dependent manner. Binds to CCR6 and triggers Ca2+ mobilization in the sperm which is important for its motility.</text>
</comment>
<comment type="subcellular location">
    <subcellularLocation>
        <location evidence="2">Secreted</location>
    </subcellularLocation>
</comment>
<comment type="tissue specificity">
    <text evidence="4">Expressed at low levels in kidney, lung, and spleen.</text>
</comment>
<comment type="similarity">
    <text evidence="7">Belongs to the beta-defensin family.</text>
</comment>
<comment type="online information" name="Platypus resources">
    <link uri="https://www.twinkl.ch/search?q=platypus"/>
</comment>
<evidence type="ECO:0000250" key="1"/>
<evidence type="ECO:0000250" key="2">
    <source>
        <dbReference type="UniProtKB" id="P60022"/>
    </source>
</evidence>
<evidence type="ECO:0000255" key="3"/>
<evidence type="ECO:0000269" key="4">
    <source>
    </source>
</evidence>
<evidence type="ECO:0000303" key="5">
    <source>
    </source>
</evidence>
<evidence type="ECO:0000303" key="6">
    <source>
    </source>
</evidence>
<evidence type="ECO:0000305" key="7"/>
<evidence type="ECO:0000305" key="8">
    <source>
    </source>
</evidence>
<evidence type="ECO:0000305" key="9">
    <source>
    </source>
</evidence>
<feature type="signal peptide" evidence="3">
    <location>
        <begin position="1"/>
        <end position="23"/>
    </location>
</feature>
<feature type="peptide" id="PRO_0000352719" description="Defensin-B1">
    <location>
        <begin position="24"/>
        <end position="58"/>
    </location>
</feature>
<feature type="propeptide" id="PRO_0000352720" evidence="3">
    <location>
        <begin position="61"/>
        <end position="66"/>
    </location>
</feature>
<feature type="disulfide bond" evidence="1">
    <location>
        <begin position="29"/>
        <end position="56"/>
    </location>
</feature>
<feature type="disulfide bond" evidence="1">
    <location>
        <begin position="36"/>
        <end position="50"/>
    </location>
</feature>
<feature type="disulfide bond" evidence="1">
    <location>
        <begin position="40"/>
        <end position="57"/>
    </location>
</feature>
<name>DEFB1_ORNAN</name>
<dbReference type="SMR" id="P0C8A5"/>
<dbReference type="HOGENOM" id="CLU_2830570_0_0_1"/>
<dbReference type="InParanoid" id="P0C8A5"/>
<dbReference type="Proteomes" id="UP000002279">
    <property type="component" value="Chromosome X2"/>
</dbReference>
<dbReference type="GO" id="GO:0005576">
    <property type="term" value="C:extracellular region"/>
    <property type="evidence" value="ECO:0007669"/>
    <property type="project" value="UniProtKB-SubCell"/>
</dbReference>
<dbReference type="GO" id="GO:0097225">
    <property type="term" value="C:sperm midpiece"/>
    <property type="evidence" value="ECO:0000250"/>
    <property type="project" value="UniProtKB"/>
</dbReference>
<dbReference type="GO" id="GO:0031731">
    <property type="term" value="F:CCR6 chemokine receptor binding"/>
    <property type="evidence" value="ECO:0000250"/>
    <property type="project" value="UniProtKB"/>
</dbReference>
<dbReference type="GO" id="GO:0019722">
    <property type="term" value="P:calcium-mediated signaling"/>
    <property type="evidence" value="ECO:0000250"/>
    <property type="project" value="UniProtKB"/>
</dbReference>
<dbReference type="GO" id="GO:0050829">
    <property type="term" value="P:defense response to Gram-negative bacterium"/>
    <property type="evidence" value="ECO:0000250"/>
    <property type="project" value="UniProtKB"/>
</dbReference>
<dbReference type="GO" id="GO:0050830">
    <property type="term" value="P:defense response to Gram-positive bacterium"/>
    <property type="evidence" value="ECO:0000250"/>
    <property type="project" value="UniProtKB"/>
</dbReference>
<dbReference type="GO" id="GO:0045087">
    <property type="term" value="P:innate immune response"/>
    <property type="evidence" value="ECO:0007669"/>
    <property type="project" value="InterPro"/>
</dbReference>
<dbReference type="GO" id="GO:0060474">
    <property type="term" value="P:positive regulation of flagellated sperm motility involved in capacitation"/>
    <property type="evidence" value="ECO:0000250"/>
    <property type="project" value="UniProtKB"/>
</dbReference>
<dbReference type="Gene3D" id="3.10.360.10">
    <property type="entry name" value="Antimicrobial Peptide, Beta-defensin 2, Chain A"/>
    <property type="match status" value="1"/>
</dbReference>
<dbReference type="InterPro" id="IPR025933">
    <property type="entry name" value="Beta_defensin_dom"/>
</dbReference>
<dbReference type="Pfam" id="PF13841">
    <property type="entry name" value="Defensin_beta_2"/>
    <property type="match status" value="1"/>
</dbReference>